<reference key="1">
    <citation type="journal article" date="2001" name="J. Bacteriol.">
        <title>Genome sequence and comparative analysis of the solvent-producing bacterium Clostridium acetobutylicum.</title>
        <authorList>
            <person name="Noelling J."/>
            <person name="Breton G."/>
            <person name="Omelchenko M.V."/>
            <person name="Makarova K.S."/>
            <person name="Zeng Q."/>
            <person name="Gibson R."/>
            <person name="Lee H.M."/>
            <person name="Dubois J."/>
            <person name="Qiu D."/>
            <person name="Hitti J."/>
            <person name="Wolf Y.I."/>
            <person name="Tatusov R.L."/>
            <person name="Sabathe F."/>
            <person name="Doucette-Stamm L.A."/>
            <person name="Soucaille P."/>
            <person name="Daly M.J."/>
            <person name="Bennett G.N."/>
            <person name="Koonin E.V."/>
            <person name="Smith D.R."/>
        </authorList>
    </citation>
    <scope>NUCLEOTIDE SEQUENCE [LARGE SCALE GENOMIC DNA]</scope>
    <source>
        <strain>ATCC 824 / DSM 792 / JCM 1419 / IAM 19013 / LMG 5710 / NBRC 13948 / NRRL B-527 / VKM B-1787 / 2291 / W</strain>
    </source>
</reference>
<reference key="2">
    <citation type="journal article" date="1993" name="J. Bacteriol.">
        <title>Cloning, sequencing, and molecular analysis of the sol operon of Clostridium acetobutylicum, a chromosomal locus involved in solventogenesis.</title>
        <authorList>
            <person name="Fischer R.J."/>
            <person name="Helms J."/>
            <person name="Duerre P."/>
        </authorList>
    </citation>
    <scope>NUCLEOTIDE SEQUENCE [GENOMIC DNA] OF 1-84</scope>
    <source>
        <strain>ATCC 824 / DSM 792 / JCM 1419 / IAM 19013 / LMG 5710 / NBRC 13948 / NRRL B-527 / VKM B-1787 / 2291 / W</strain>
    </source>
</reference>
<proteinExistence type="inferred from homology"/>
<accession>P33747</accession>
<protein>
    <recommendedName>
        <fullName>Uncharacterized protein CA_P0160</fullName>
    </recommendedName>
</protein>
<keyword id="KW-0614">Plasmid</keyword>
<keyword id="KW-1185">Reference proteome</keyword>
<keyword id="KW-0732">Signal</keyword>
<evidence type="ECO:0000255" key="1"/>
<sequence>MKKKLKSVLIWFLIFTFNLSLGSFREVFADNNDAVLATAITLSKNEDKLLVNQTDTLTAVVTPDNASNKGVTWSSSDTNTAAVDQNGKITALKVGTVTITAATQDGSNLSSSCTVSITRLANSIVLNKMVDKLPVGQTDLLTALVRPLDSAVKDVTWTTSDPSVVSVDDKGNIKALKLGMAVVTAAVNDGRNLHASCNVYVTNLLSKRKKADLVVTLDNSMNIDKTTFKDKLNKYIESKLKGSNIDYTIQSIQGYKSKKVLIIQDQPAWESGTKVYDDIKQEGYTSDVITANQISSTELTQYSHIYIPSDQAQSFYDELNQNYSKLEAWTKGGGILIFNAADEGHHSGQWQGSFLGLTHTPSDFQPTITIVKQDPILTANLKTTITGNYAAHSQFTSYPSNSIIFAVGNKNLPTILEYRYGDGLVFAQTTTAEFYATNSGDLSPYLDNEIKYTIQKTLGRSFSDILKKPTWRENSEKFVINLGDTLANDVKENSMAQTLAELESNKAYVTLIGNNNNKDTLNSFINKNDGRGMFIDNSDLDGALSKAGDYIMTVLNKEEQNSNMFLTDDYINYNESSSEDVSWSYTQDCKHLNYDNDFVNCSKTGDIALDNDLGISDFANGQWVNNEINEFKKPGKYTIAYKFKDNAIVNETVNVNRKPTPIFTAYTAQDAVSGKYDVVIKDEDKSYDIDHENSDGDRKGIVNSKFQWKEVTQGVNDTWHDGKLPSGQDSNKDFIVKLEVQDLEGQWSNPLVKYITTRNSNVAPHAQFTESAEEMPVDQLNNDASVGMDAIFTDESYDANGDSIREHWIVTDNNGNTIYDSTSMPKASVFVGKPLGTYNVTLTCDDGPTPKVGAMLTSDSYTLQLKLVPINHKPVAKFEVDNTSKVPADIKITEDSTDPDGDKITEKDWTVTDDKGKVVLQTENKLPDLSNLNGSYTITLKVKDSPVGLPELWSDPLSKTIIVEGAK</sequence>
<gene>
    <name type="ordered locus">CA_P0160</name>
</gene>
<geneLocation type="plasmid">
    <name>pSOL1</name>
</geneLocation>
<organism>
    <name type="scientific">Clostridium acetobutylicum (strain ATCC 824 / DSM 792 / JCM 1419 / IAM 19013 / LMG 5710 / NBRC 13948 / NRRL B-527 / VKM B-1787 / 2291 / W)</name>
    <dbReference type="NCBI Taxonomy" id="272562"/>
    <lineage>
        <taxon>Bacteria</taxon>
        <taxon>Bacillati</taxon>
        <taxon>Bacillota</taxon>
        <taxon>Clostridia</taxon>
        <taxon>Eubacteriales</taxon>
        <taxon>Clostridiaceae</taxon>
        <taxon>Clostridium</taxon>
    </lineage>
</organism>
<feature type="signal peptide" evidence="1">
    <location>
        <begin position="1"/>
        <end position="29"/>
    </location>
</feature>
<feature type="chain" id="PRO_0000013763" description="Uncharacterized protein CA_P0160">
    <location>
        <begin position="30"/>
        <end position="967"/>
    </location>
</feature>
<feature type="domain" description="BIG2 1" evidence="1">
    <location>
        <begin position="38"/>
        <end position="107"/>
    </location>
</feature>
<feature type="domain" description="BIG2 2" evidence="1">
    <location>
        <begin position="133"/>
        <end position="190"/>
    </location>
</feature>
<dbReference type="EMBL" id="AE001438">
    <property type="protein sequence ID" value="AAK76905.1"/>
    <property type="molecule type" value="Genomic_DNA"/>
</dbReference>
<dbReference type="EMBL" id="X72831">
    <property type="protein sequence ID" value="CAA51341.1"/>
    <property type="molecule type" value="Genomic_DNA"/>
</dbReference>
<dbReference type="PIR" id="S33432">
    <property type="entry name" value="S33432"/>
</dbReference>
<dbReference type="RefSeq" id="NP_149323.1">
    <property type="nucleotide sequence ID" value="NC_001988.2"/>
</dbReference>
<dbReference type="RefSeq" id="WP_010890844.1">
    <property type="nucleotide sequence ID" value="NC_001988.2"/>
</dbReference>
<dbReference type="SMR" id="P33747"/>
<dbReference type="KEGG" id="cac:CA_P0160"/>
<dbReference type="PATRIC" id="fig|272562.8.peg.160"/>
<dbReference type="HOGENOM" id="CLU_306242_0_0_9"/>
<dbReference type="OrthoDB" id="1904974at2"/>
<dbReference type="Proteomes" id="UP000000814">
    <property type="component" value="Plasmid pSOL1"/>
</dbReference>
<dbReference type="Gene3D" id="2.60.40.1080">
    <property type="match status" value="2"/>
</dbReference>
<dbReference type="Gene3D" id="2.60.40.10">
    <property type="entry name" value="Immunoglobulins"/>
    <property type="match status" value="1"/>
</dbReference>
<dbReference type="InterPro" id="IPR003343">
    <property type="entry name" value="Big_2"/>
</dbReference>
<dbReference type="InterPro" id="IPR029062">
    <property type="entry name" value="Class_I_gatase-like"/>
</dbReference>
<dbReference type="InterPro" id="IPR013783">
    <property type="entry name" value="Ig-like_fold"/>
</dbReference>
<dbReference type="InterPro" id="IPR008964">
    <property type="entry name" value="Invasin/intimin_cell_adhesion"/>
</dbReference>
<dbReference type="Pfam" id="PF02368">
    <property type="entry name" value="Big_2"/>
    <property type="match status" value="2"/>
</dbReference>
<dbReference type="SMART" id="SM00635">
    <property type="entry name" value="BID_2"/>
    <property type="match status" value="2"/>
</dbReference>
<dbReference type="SUPFAM" id="SSF52317">
    <property type="entry name" value="Class I glutamine amidotransferase-like"/>
    <property type="match status" value="1"/>
</dbReference>
<dbReference type="SUPFAM" id="SSF49373">
    <property type="entry name" value="Invasin/intimin cell-adhesion fragments"/>
    <property type="match status" value="2"/>
</dbReference>
<name>Y4160_CLOAB</name>